<proteinExistence type="inferred from homology"/>
<dbReference type="EMBL" id="X74464">
    <property type="protein sequence ID" value="CAA52488.1"/>
    <property type="molecule type" value="Genomic_DNA"/>
</dbReference>
<dbReference type="EMBL" id="M96301">
    <property type="protein sequence ID" value="AAA47040.1"/>
    <property type="molecule type" value="Genomic_DNA"/>
</dbReference>
<dbReference type="PIR" id="S36595">
    <property type="entry name" value="S36595"/>
</dbReference>
<dbReference type="RefSeq" id="NP_041866.1">
    <property type="nucleotide sequence ID" value="NC_001596.1"/>
</dbReference>
<dbReference type="SMR" id="Q02480"/>
<dbReference type="DNASU" id="1489482"/>
<dbReference type="GeneID" id="1489482"/>
<dbReference type="KEGG" id="vg:1489482"/>
<dbReference type="OrthoDB" id="5037at10239"/>
<dbReference type="Proteomes" id="UP000009104">
    <property type="component" value="Genome"/>
</dbReference>
<dbReference type="GO" id="GO:0042025">
    <property type="term" value="C:host cell nucleus"/>
    <property type="evidence" value="ECO:0007669"/>
    <property type="project" value="UniProtKB-SubCell"/>
</dbReference>
<dbReference type="GO" id="GO:0039620">
    <property type="term" value="C:T=7 icosahedral viral capsid"/>
    <property type="evidence" value="ECO:0007669"/>
    <property type="project" value="UniProtKB-UniRule"/>
</dbReference>
<dbReference type="GO" id="GO:0005198">
    <property type="term" value="F:structural molecule activity"/>
    <property type="evidence" value="ECO:0007669"/>
    <property type="project" value="UniProtKB-UniRule"/>
</dbReference>
<dbReference type="GO" id="GO:0075509">
    <property type="term" value="P:endocytosis involved in viral entry into host cell"/>
    <property type="evidence" value="ECO:0007669"/>
    <property type="project" value="UniProtKB-KW"/>
</dbReference>
<dbReference type="GO" id="GO:0019062">
    <property type="term" value="P:virion attachment to host cell"/>
    <property type="evidence" value="ECO:0007669"/>
    <property type="project" value="UniProtKB-UniRule"/>
</dbReference>
<dbReference type="Gene3D" id="2.60.175.20">
    <property type="entry name" value="Major capsid L1 (late) superfamily, Papillomavirus"/>
    <property type="match status" value="2"/>
</dbReference>
<dbReference type="HAMAP" id="MF_04002">
    <property type="entry name" value="PPV_L1"/>
    <property type="match status" value="1"/>
</dbReference>
<dbReference type="InterPro" id="IPR002210">
    <property type="entry name" value="Capsid_L1_Papillomavir"/>
</dbReference>
<dbReference type="InterPro" id="IPR036973">
    <property type="entry name" value="Capsid_L1_sf_Papillomavir"/>
</dbReference>
<dbReference type="InterPro" id="IPR011222">
    <property type="entry name" value="dsDNA_vir_gr_I_capsid"/>
</dbReference>
<dbReference type="Pfam" id="PF00500">
    <property type="entry name" value="Late_protein_L1"/>
    <property type="match status" value="1"/>
</dbReference>
<dbReference type="PRINTS" id="PR00865">
    <property type="entry name" value="HPVCAPSIDL1"/>
</dbReference>
<dbReference type="SUPFAM" id="SSF88648">
    <property type="entry name" value="Group I dsDNA viruses"/>
    <property type="match status" value="1"/>
</dbReference>
<keyword id="KW-0167">Capsid protein</keyword>
<keyword id="KW-1015">Disulfide bond</keyword>
<keyword id="KW-1048">Host nucleus</keyword>
<keyword id="KW-0945">Host-virus interaction</keyword>
<keyword id="KW-0426">Late protein</keyword>
<keyword id="KW-1185">Reference proteome</keyword>
<keyword id="KW-1145">T=7 icosahedral capsid protein</keyword>
<keyword id="KW-1161">Viral attachment to host cell</keyword>
<keyword id="KW-1162">Viral penetration into host cytoplasm</keyword>
<keyword id="KW-0946">Virion</keyword>
<keyword id="KW-1164">Virus endocytosis by host</keyword>
<keyword id="KW-1160">Virus entry into host cell</keyword>
<reference key="1">
    <citation type="journal article" date="1994" name="Curr. Top. Microbiol. Immunol.">
        <title>Primer-directed sequencing of human papillomavirus types.</title>
        <authorList>
            <person name="Delius H."/>
            <person name="Hofmann B."/>
        </authorList>
    </citation>
    <scope>NUCLEOTIDE SEQUENCE [GENOMIC DNA]</scope>
</reference>
<reference key="2">
    <citation type="journal article" date="1992" name="J. Virol.">
        <title>Phylogenetic analysis of 48 papillomavirus types and 28 subtypes and variants: a showcase for the molecular evolution of DNA viruses.</title>
        <authorList>
            <person name="Chan S.-Y."/>
            <person name="Bernard H.U."/>
            <person name="Ong C.K."/>
            <person name="Chan S.P."/>
            <person name="Birgit H."/>
            <person name="Delius H."/>
        </authorList>
    </citation>
    <scope>NUCLEOTIDE SEQUENCE [GENOMIC DNA] OF 312-355</scope>
</reference>
<name>VL1_HPV09</name>
<sequence>MSLWLPASGKVYLPPATPVARVQSTDEYVERTNIFYHAISDRLLTVGHPYYDVRSGDGQRIEVPKVSGNQYRAFRISLPDPNRFALADMSVYNPDKERLVWACRGIEIGRGQPLGVGTSGHPLFNKVRDTENSSNYQGTTMDDRQNTSFDPKQVQMFIIGCIPCLGEHWDKAKVCEKDANNQLGLCPPIELRNTVIEDGDMFDIGFGNINNKELSFNKSDVSLDIVDETCKYPDFLTMANDVYGDACFFFARREQCYARHYYVRGGSVGDAVPDGAVNQDHNFFLPAKSDQQQRTIANSTYYPTVSGSLVTSDAQLFNRPFWLQRAQGHNNGILWGNQIFVTVADNTRNTNFTISVSTEAAQTEEYNANNIREYLRHVEEYQISLILQLCKVPLVAEVLSQINAMNSGILEDWQLGFVPTPENAVHDIYRYIDSKATKCPDAVEPTEKEDPFAKYSFWKVDLTERLSLDLDQYPLGRKFLFQAGLQTRKRPIKTSVKTSKNAKRRRT</sequence>
<evidence type="ECO:0000255" key="1">
    <source>
        <dbReference type="HAMAP-Rule" id="MF_04002"/>
    </source>
</evidence>
<protein>
    <recommendedName>
        <fullName evidence="1">Major capsid protein L1</fullName>
    </recommendedName>
</protein>
<accession>Q02480</accession>
<organism>
    <name type="scientific">Human papillomavirus 9</name>
    <dbReference type="NCBI Taxonomy" id="10621"/>
    <lineage>
        <taxon>Viruses</taxon>
        <taxon>Monodnaviria</taxon>
        <taxon>Shotokuvirae</taxon>
        <taxon>Cossaviricota</taxon>
        <taxon>Papovaviricetes</taxon>
        <taxon>Zurhausenvirales</taxon>
        <taxon>Papillomaviridae</taxon>
        <taxon>Firstpapillomavirinae</taxon>
        <taxon>Betapapillomavirus</taxon>
        <taxon>Betapapillomavirus 2</taxon>
    </lineage>
</organism>
<feature type="chain" id="PRO_0000133493" description="Major capsid protein L1">
    <location>
        <begin position="1"/>
        <end position="507"/>
    </location>
</feature>
<feature type="disulfide bond" description="Interchain (with C-439)" evidence="1">
    <location>
        <position position="175"/>
    </location>
</feature>
<feature type="disulfide bond" description="Interchain (with C-175)" evidence="1">
    <location>
        <position position="439"/>
    </location>
</feature>
<comment type="function">
    <text evidence="1">Forms an icosahedral capsid with a T=7 symmetry and a 50 nm diameter. The capsid is composed of 72 pentamers linked to each other by disulfide bonds and associated with L2 proteins. Binds to heparan sulfate proteoglycans on cell surface of basal layer keratinocytes to provide initial virion attachment. This binding mediates a conformational change in the virus capsid that facilitates efficient infection. The virion enters the host cell via endocytosis. During virus trafficking, L1 protein dissociates from the viral DNA and the genomic DNA is released to the host nucleus. The virion assembly takes place within the cell nucleus. Encapsulates the genomic DNA together with protein L2.</text>
</comment>
<comment type="subunit">
    <text evidence="1">Self-assembles into homopentamers. The capsid has an icosahedral symmetry and consists of 72 capsomers, with each capsomer being a pentamer of L1. Interacts with the minor capsid protein L2; this interaction is necessary for viral genome encapsidation. Interacts with protein E2; this interaction enhances E2-dependent replication and transcription activation.</text>
</comment>
<comment type="subcellular location">
    <subcellularLocation>
        <location evidence="1">Virion</location>
    </subcellularLocation>
    <subcellularLocation>
        <location evidence="1">Host nucleus</location>
    </subcellularLocation>
</comment>
<comment type="similarity">
    <text evidence="1">Belongs to the papillomaviridae L1 protein family.</text>
</comment>
<organismHost>
    <name type="scientific">Homo sapiens</name>
    <name type="common">Human</name>
    <dbReference type="NCBI Taxonomy" id="9606"/>
</organismHost>
<gene>
    <name evidence="1" type="primary">L1</name>
</gene>